<gene>
    <name evidence="1" type="primary">rplM</name>
    <name type="ordered locus">RHE_CH01571</name>
</gene>
<reference key="1">
    <citation type="journal article" date="2006" name="Proc. Natl. Acad. Sci. U.S.A.">
        <title>The partitioned Rhizobium etli genome: genetic and metabolic redundancy in seven interacting replicons.</title>
        <authorList>
            <person name="Gonzalez V."/>
            <person name="Santamaria R.I."/>
            <person name="Bustos P."/>
            <person name="Hernandez-Gonzalez I."/>
            <person name="Medrano-Soto A."/>
            <person name="Moreno-Hagelsieb G."/>
            <person name="Janga S.C."/>
            <person name="Ramirez M.A."/>
            <person name="Jimenez-Jacinto V."/>
            <person name="Collado-Vides J."/>
            <person name="Davila G."/>
        </authorList>
    </citation>
    <scope>NUCLEOTIDE SEQUENCE [LARGE SCALE GENOMIC DNA]</scope>
    <source>
        <strain>ATCC 51251 / DSM 11541 / JCM 21823 / NBRC 15573 / CFN 42</strain>
    </source>
</reference>
<name>RL13_RHIEC</name>
<comment type="function">
    <text evidence="1">This protein is one of the early assembly proteins of the 50S ribosomal subunit, although it is not seen to bind rRNA by itself. It is important during the early stages of 50S assembly.</text>
</comment>
<comment type="subunit">
    <text evidence="1">Part of the 50S ribosomal subunit.</text>
</comment>
<comment type="similarity">
    <text evidence="1">Belongs to the universal ribosomal protein uL13 family.</text>
</comment>
<feature type="chain" id="PRO_0000261781" description="Large ribosomal subunit protein uL13">
    <location>
        <begin position="1"/>
        <end position="154"/>
    </location>
</feature>
<proteinExistence type="inferred from homology"/>
<protein>
    <recommendedName>
        <fullName evidence="1">Large ribosomal subunit protein uL13</fullName>
    </recommendedName>
    <alternativeName>
        <fullName evidence="2">50S ribosomal protein L13</fullName>
    </alternativeName>
</protein>
<dbReference type="EMBL" id="CP000133">
    <property type="protein sequence ID" value="ABC90373.1"/>
    <property type="molecule type" value="Genomic_DNA"/>
</dbReference>
<dbReference type="RefSeq" id="WP_011424898.1">
    <property type="nucleotide sequence ID" value="NC_007761.1"/>
</dbReference>
<dbReference type="SMR" id="Q2K9W3"/>
<dbReference type="GeneID" id="66141325"/>
<dbReference type="KEGG" id="ret:RHE_CH01571"/>
<dbReference type="eggNOG" id="COG0102">
    <property type="taxonomic scope" value="Bacteria"/>
</dbReference>
<dbReference type="HOGENOM" id="CLU_082184_2_0_5"/>
<dbReference type="OrthoDB" id="9801330at2"/>
<dbReference type="Proteomes" id="UP000001936">
    <property type="component" value="Chromosome"/>
</dbReference>
<dbReference type="GO" id="GO:0022625">
    <property type="term" value="C:cytosolic large ribosomal subunit"/>
    <property type="evidence" value="ECO:0007669"/>
    <property type="project" value="TreeGrafter"/>
</dbReference>
<dbReference type="GO" id="GO:0003729">
    <property type="term" value="F:mRNA binding"/>
    <property type="evidence" value="ECO:0007669"/>
    <property type="project" value="TreeGrafter"/>
</dbReference>
<dbReference type="GO" id="GO:0003735">
    <property type="term" value="F:structural constituent of ribosome"/>
    <property type="evidence" value="ECO:0007669"/>
    <property type="project" value="InterPro"/>
</dbReference>
<dbReference type="GO" id="GO:0017148">
    <property type="term" value="P:negative regulation of translation"/>
    <property type="evidence" value="ECO:0007669"/>
    <property type="project" value="TreeGrafter"/>
</dbReference>
<dbReference type="GO" id="GO:0006412">
    <property type="term" value="P:translation"/>
    <property type="evidence" value="ECO:0007669"/>
    <property type="project" value="UniProtKB-UniRule"/>
</dbReference>
<dbReference type="CDD" id="cd00392">
    <property type="entry name" value="Ribosomal_L13"/>
    <property type="match status" value="1"/>
</dbReference>
<dbReference type="FunFam" id="3.90.1180.10:FF:000001">
    <property type="entry name" value="50S ribosomal protein L13"/>
    <property type="match status" value="1"/>
</dbReference>
<dbReference type="Gene3D" id="3.90.1180.10">
    <property type="entry name" value="Ribosomal protein L13"/>
    <property type="match status" value="1"/>
</dbReference>
<dbReference type="HAMAP" id="MF_01366">
    <property type="entry name" value="Ribosomal_uL13"/>
    <property type="match status" value="1"/>
</dbReference>
<dbReference type="InterPro" id="IPR005822">
    <property type="entry name" value="Ribosomal_uL13"/>
</dbReference>
<dbReference type="InterPro" id="IPR005823">
    <property type="entry name" value="Ribosomal_uL13_bac-type"/>
</dbReference>
<dbReference type="InterPro" id="IPR036899">
    <property type="entry name" value="Ribosomal_uL13_sf"/>
</dbReference>
<dbReference type="NCBIfam" id="TIGR01066">
    <property type="entry name" value="rplM_bact"/>
    <property type="match status" value="1"/>
</dbReference>
<dbReference type="PANTHER" id="PTHR11545:SF2">
    <property type="entry name" value="LARGE RIBOSOMAL SUBUNIT PROTEIN UL13M"/>
    <property type="match status" value="1"/>
</dbReference>
<dbReference type="PANTHER" id="PTHR11545">
    <property type="entry name" value="RIBOSOMAL PROTEIN L13"/>
    <property type="match status" value="1"/>
</dbReference>
<dbReference type="Pfam" id="PF00572">
    <property type="entry name" value="Ribosomal_L13"/>
    <property type="match status" value="1"/>
</dbReference>
<dbReference type="PIRSF" id="PIRSF002181">
    <property type="entry name" value="Ribosomal_L13"/>
    <property type="match status" value="1"/>
</dbReference>
<dbReference type="SUPFAM" id="SSF52161">
    <property type="entry name" value="Ribosomal protein L13"/>
    <property type="match status" value="1"/>
</dbReference>
<keyword id="KW-1185">Reference proteome</keyword>
<keyword id="KW-0687">Ribonucleoprotein</keyword>
<keyword id="KW-0689">Ribosomal protein</keyword>
<sequence length="154" mass="17286">MATFSQKPAEVEKKWVIIDAEGLVVGRLASIIAMRLRGKHKATFTPHVDDGDNVIVINADKVVFTGKKYSDKVYYWHTGYAGGIKERTARQIIEGRFPERVLEKAVERMVPRGPLGRRQMKNLRVYAGPNHPHEAQQPVALDVAALNKKNVRSA</sequence>
<evidence type="ECO:0000255" key="1">
    <source>
        <dbReference type="HAMAP-Rule" id="MF_01366"/>
    </source>
</evidence>
<evidence type="ECO:0000305" key="2"/>
<accession>Q2K9W3</accession>
<organism>
    <name type="scientific">Rhizobium etli (strain ATCC 51251 / DSM 11541 / JCM 21823 / NBRC 15573 / CFN 42)</name>
    <dbReference type="NCBI Taxonomy" id="347834"/>
    <lineage>
        <taxon>Bacteria</taxon>
        <taxon>Pseudomonadati</taxon>
        <taxon>Pseudomonadota</taxon>
        <taxon>Alphaproteobacteria</taxon>
        <taxon>Hyphomicrobiales</taxon>
        <taxon>Rhizobiaceae</taxon>
        <taxon>Rhizobium/Agrobacterium group</taxon>
        <taxon>Rhizobium</taxon>
    </lineage>
</organism>